<accession>B5EYZ7</accession>
<gene>
    <name evidence="1" type="primary">atpG</name>
    <name type="ordered locus">SeAg_B4091</name>
</gene>
<keyword id="KW-0066">ATP synthesis</keyword>
<keyword id="KW-0997">Cell inner membrane</keyword>
<keyword id="KW-1003">Cell membrane</keyword>
<keyword id="KW-0139">CF(1)</keyword>
<keyword id="KW-0375">Hydrogen ion transport</keyword>
<keyword id="KW-0406">Ion transport</keyword>
<keyword id="KW-0472">Membrane</keyword>
<keyword id="KW-0813">Transport</keyword>
<sequence length="287" mass="31555">MAGAKEIRSKIASVQNTQKITKAMEMVAASKMRKSQDRMAASRPYAETMRKVIGHLANGNLEYKHPYLEERDVKRVGYLVVSTDRGLCGGLNINLFKKLLADMKAWSDKGVQCELAMIGSKGVSFFNSVGGNVVAQVTGMGDNPSLSELIGPVKVMLQAYDEGRLDKLYIVSNKFINTMSQVPTITQLLPLPASEDDDLKRKAWDYLYEPDPKALLDTLLRRYVESQVYQGVVENLASEQAARMVAMKAATDNGGSLIKELQLVYNKARQASITQELTEIVSGAAAV</sequence>
<protein>
    <recommendedName>
        <fullName evidence="1">ATP synthase gamma chain</fullName>
    </recommendedName>
    <alternativeName>
        <fullName evidence="1">ATP synthase F1 sector gamma subunit</fullName>
    </alternativeName>
    <alternativeName>
        <fullName evidence="1">F-ATPase gamma subunit</fullName>
    </alternativeName>
</protein>
<name>ATPG_SALA4</name>
<feature type="chain" id="PRO_1000134198" description="ATP synthase gamma chain">
    <location>
        <begin position="1"/>
        <end position="287"/>
    </location>
</feature>
<organism>
    <name type="scientific">Salmonella agona (strain SL483)</name>
    <dbReference type="NCBI Taxonomy" id="454166"/>
    <lineage>
        <taxon>Bacteria</taxon>
        <taxon>Pseudomonadati</taxon>
        <taxon>Pseudomonadota</taxon>
        <taxon>Gammaproteobacteria</taxon>
        <taxon>Enterobacterales</taxon>
        <taxon>Enterobacteriaceae</taxon>
        <taxon>Salmonella</taxon>
    </lineage>
</organism>
<dbReference type="EMBL" id="CP001138">
    <property type="protein sequence ID" value="ACH52348.1"/>
    <property type="molecule type" value="Genomic_DNA"/>
</dbReference>
<dbReference type="RefSeq" id="WP_000896506.1">
    <property type="nucleotide sequence ID" value="NC_011149.1"/>
</dbReference>
<dbReference type="SMR" id="B5EYZ7"/>
<dbReference type="GeneID" id="66758155"/>
<dbReference type="KEGG" id="sea:SeAg_B4091"/>
<dbReference type="HOGENOM" id="CLU_050669_0_1_6"/>
<dbReference type="Proteomes" id="UP000008819">
    <property type="component" value="Chromosome"/>
</dbReference>
<dbReference type="GO" id="GO:0005886">
    <property type="term" value="C:plasma membrane"/>
    <property type="evidence" value="ECO:0007669"/>
    <property type="project" value="UniProtKB-SubCell"/>
</dbReference>
<dbReference type="GO" id="GO:0045259">
    <property type="term" value="C:proton-transporting ATP synthase complex"/>
    <property type="evidence" value="ECO:0007669"/>
    <property type="project" value="UniProtKB-KW"/>
</dbReference>
<dbReference type="GO" id="GO:0005524">
    <property type="term" value="F:ATP binding"/>
    <property type="evidence" value="ECO:0007669"/>
    <property type="project" value="UniProtKB-UniRule"/>
</dbReference>
<dbReference type="GO" id="GO:0046933">
    <property type="term" value="F:proton-transporting ATP synthase activity, rotational mechanism"/>
    <property type="evidence" value="ECO:0007669"/>
    <property type="project" value="UniProtKB-UniRule"/>
</dbReference>
<dbReference type="GO" id="GO:0042777">
    <property type="term" value="P:proton motive force-driven plasma membrane ATP synthesis"/>
    <property type="evidence" value="ECO:0007669"/>
    <property type="project" value="UniProtKB-UniRule"/>
</dbReference>
<dbReference type="CDD" id="cd12151">
    <property type="entry name" value="F1-ATPase_gamma"/>
    <property type="match status" value="1"/>
</dbReference>
<dbReference type="FunFam" id="1.10.287.80:FF:000005">
    <property type="entry name" value="ATP synthase gamma chain"/>
    <property type="match status" value="2"/>
</dbReference>
<dbReference type="FunFam" id="3.40.1380.10:FF:000001">
    <property type="entry name" value="ATP synthase gamma chain"/>
    <property type="match status" value="1"/>
</dbReference>
<dbReference type="Gene3D" id="3.40.1380.10">
    <property type="match status" value="1"/>
</dbReference>
<dbReference type="Gene3D" id="1.10.287.80">
    <property type="entry name" value="ATP synthase, gamma subunit, helix hairpin domain"/>
    <property type="match status" value="1"/>
</dbReference>
<dbReference type="HAMAP" id="MF_00815">
    <property type="entry name" value="ATP_synth_gamma_bact"/>
    <property type="match status" value="1"/>
</dbReference>
<dbReference type="InterPro" id="IPR035968">
    <property type="entry name" value="ATP_synth_F1_ATPase_gsu"/>
</dbReference>
<dbReference type="InterPro" id="IPR000131">
    <property type="entry name" value="ATP_synth_F1_gsu"/>
</dbReference>
<dbReference type="InterPro" id="IPR023632">
    <property type="entry name" value="ATP_synth_F1_gsu_CS"/>
</dbReference>
<dbReference type="NCBIfam" id="TIGR01146">
    <property type="entry name" value="ATPsyn_F1gamma"/>
    <property type="match status" value="1"/>
</dbReference>
<dbReference type="NCBIfam" id="NF004144">
    <property type="entry name" value="PRK05621.1-1"/>
    <property type="match status" value="1"/>
</dbReference>
<dbReference type="PANTHER" id="PTHR11693">
    <property type="entry name" value="ATP SYNTHASE GAMMA CHAIN"/>
    <property type="match status" value="1"/>
</dbReference>
<dbReference type="PANTHER" id="PTHR11693:SF22">
    <property type="entry name" value="ATP SYNTHASE SUBUNIT GAMMA, MITOCHONDRIAL"/>
    <property type="match status" value="1"/>
</dbReference>
<dbReference type="Pfam" id="PF00231">
    <property type="entry name" value="ATP-synt"/>
    <property type="match status" value="1"/>
</dbReference>
<dbReference type="PRINTS" id="PR00126">
    <property type="entry name" value="ATPASEGAMMA"/>
</dbReference>
<dbReference type="SUPFAM" id="SSF52943">
    <property type="entry name" value="ATP synthase (F1-ATPase), gamma subunit"/>
    <property type="match status" value="1"/>
</dbReference>
<dbReference type="PROSITE" id="PS00153">
    <property type="entry name" value="ATPASE_GAMMA"/>
    <property type="match status" value="1"/>
</dbReference>
<comment type="function">
    <text evidence="1">Produces ATP from ADP in the presence of a proton gradient across the membrane. The gamma chain is believed to be important in regulating ATPase activity and the flow of protons through the CF(0) complex.</text>
</comment>
<comment type="subunit">
    <text evidence="1">F-type ATPases have 2 components, CF(1) - the catalytic core - and CF(0) - the membrane proton channel. CF(1) has five subunits: alpha(3), beta(3), gamma(1), delta(1), epsilon(1). CF(0) has three main subunits: a, b and c.</text>
</comment>
<comment type="subcellular location">
    <subcellularLocation>
        <location evidence="1">Cell inner membrane</location>
        <topology evidence="1">Peripheral membrane protein</topology>
    </subcellularLocation>
</comment>
<comment type="similarity">
    <text evidence="1">Belongs to the ATPase gamma chain family.</text>
</comment>
<evidence type="ECO:0000255" key="1">
    <source>
        <dbReference type="HAMAP-Rule" id="MF_00815"/>
    </source>
</evidence>
<proteinExistence type="inferred from homology"/>
<reference key="1">
    <citation type="journal article" date="2011" name="J. Bacteriol.">
        <title>Comparative genomics of 28 Salmonella enterica isolates: evidence for CRISPR-mediated adaptive sublineage evolution.</title>
        <authorList>
            <person name="Fricke W.F."/>
            <person name="Mammel M.K."/>
            <person name="McDermott P.F."/>
            <person name="Tartera C."/>
            <person name="White D.G."/>
            <person name="Leclerc J.E."/>
            <person name="Ravel J."/>
            <person name="Cebula T.A."/>
        </authorList>
    </citation>
    <scope>NUCLEOTIDE SEQUENCE [LARGE SCALE GENOMIC DNA]</scope>
    <source>
        <strain>SL483</strain>
    </source>
</reference>